<dbReference type="EC" id="3.6.1.-" evidence="1"/>
<dbReference type="EMBL" id="CP000647">
    <property type="protein sequence ID" value="ABR78211.1"/>
    <property type="molecule type" value="Genomic_DNA"/>
</dbReference>
<dbReference type="RefSeq" id="WP_002913754.1">
    <property type="nucleotide sequence ID" value="NC_009648.1"/>
</dbReference>
<dbReference type="SMR" id="A6TC90"/>
<dbReference type="STRING" id="272620.KPN_02801"/>
<dbReference type="PaxDb" id="272620-KPN_02801"/>
<dbReference type="EnsemblBacteria" id="ABR78211">
    <property type="protein sequence ID" value="ABR78211"/>
    <property type="gene ID" value="KPN_02801"/>
</dbReference>
<dbReference type="GeneID" id="93271936"/>
<dbReference type="KEGG" id="kpn:KPN_02801"/>
<dbReference type="HOGENOM" id="CLU_062658_6_0_6"/>
<dbReference type="Proteomes" id="UP000000265">
    <property type="component" value="Chromosome"/>
</dbReference>
<dbReference type="GO" id="GO:0005829">
    <property type="term" value="C:cytosol"/>
    <property type="evidence" value="ECO:0007669"/>
    <property type="project" value="TreeGrafter"/>
</dbReference>
<dbReference type="GO" id="GO:0016818">
    <property type="term" value="F:hydrolase activity, acting on acid anhydrides, in phosphorus-containing anhydrides"/>
    <property type="evidence" value="ECO:0007669"/>
    <property type="project" value="InterPro"/>
</dbReference>
<dbReference type="GO" id="GO:0046872">
    <property type="term" value="F:metal ion binding"/>
    <property type="evidence" value="ECO:0007669"/>
    <property type="project" value="UniProtKB-KW"/>
</dbReference>
<dbReference type="GO" id="GO:0006753">
    <property type="term" value="P:nucleoside phosphate metabolic process"/>
    <property type="evidence" value="ECO:0007669"/>
    <property type="project" value="TreeGrafter"/>
</dbReference>
<dbReference type="GO" id="GO:0019693">
    <property type="term" value="P:ribose phosphate metabolic process"/>
    <property type="evidence" value="ECO:0007669"/>
    <property type="project" value="TreeGrafter"/>
</dbReference>
<dbReference type="CDD" id="cd24157">
    <property type="entry name" value="NUDIX_GDPMK"/>
    <property type="match status" value="1"/>
</dbReference>
<dbReference type="FunFam" id="3.90.79.10:FF:000010">
    <property type="entry name" value="GDP-mannose pyrophosphatase NudK"/>
    <property type="match status" value="1"/>
</dbReference>
<dbReference type="Gene3D" id="3.90.79.10">
    <property type="entry name" value="Nucleoside Triphosphate Pyrophosphohydrolase"/>
    <property type="match status" value="1"/>
</dbReference>
<dbReference type="InterPro" id="IPR004385">
    <property type="entry name" value="NDP_pyrophosphatase"/>
</dbReference>
<dbReference type="InterPro" id="IPR015797">
    <property type="entry name" value="NUDIX_hydrolase-like_dom_sf"/>
</dbReference>
<dbReference type="InterPro" id="IPR000086">
    <property type="entry name" value="NUDIX_hydrolase_dom"/>
</dbReference>
<dbReference type="NCBIfam" id="TIGR00052">
    <property type="entry name" value="nudix-type nucleoside diphosphatase, YffH/AdpP family"/>
    <property type="match status" value="1"/>
</dbReference>
<dbReference type="NCBIfam" id="NF011585">
    <property type="entry name" value="PRK15009.1"/>
    <property type="match status" value="1"/>
</dbReference>
<dbReference type="PANTHER" id="PTHR11839:SF18">
    <property type="entry name" value="NUDIX HYDROLASE DOMAIN-CONTAINING PROTEIN"/>
    <property type="match status" value="1"/>
</dbReference>
<dbReference type="PANTHER" id="PTHR11839">
    <property type="entry name" value="UDP/ADP-SUGAR PYROPHOSPHATASE"/>
    <property type="match status" value="1"/>
</dbReference>
<dbReference type="Pfam" id="PF00293">
    <property type="entry name" value="NUDIX"/>
    <property type="match status" value="1"/>
</dbReference>
<dbReference type="SUPFAM" id="SSF55811">
    <property type="entry name" value="Nudix"/>
    <property type="match status" value="1"/>
</dbReference>
<dbReference type="PROSITE" id="PS51462">
    <property type="entry name" value="NUDIX"/>
    <property type="match status" value="1"/>
</dbReference>
<evidence type="ECO:0000250" key="1">
    <source>
        <dbReference type="UniProtKB" id="P37128"/>
    </source>
</evidence>
<evidence type="ECO:0000255" key="2">
    <source>
        <dbReference type="PROSITE-ProRule" id="PRU00794"/>
    </source>
</evidence>
<evidence type="ECO:0000305" key="3"/>
<sequence>MSLNIHVIKDKILSENWFVLRNMTYELTRADGSVVRHKREVYDRGNGATVLLYNRHKQTVVLVRQFRVATWVNGNHDGMLIETCAGLLDNDEPEACIRKEAVEETGYEVGEVRKLFELFMSPGGVTEVVHFFIAEYSDAQRTTSGGGVDDEAIEVLELPFSQALQMVADGEIRDGKAVILLQYLQTSGLMSGNSDKSD</sequence>
<comment type="function">
    <text evidence="1">Nucleoside diphosphate sugar hydrolase that hydrolyzes GDP-mannose as its preferred substrate, yielding GMP and mannose-1-phosphate.</text>
</comment>
<comment type="catalytic activity">
    <reaction evidence="1">
        <text>GDP-alpha-D-mannose + H2O = alpha-D-mannose 1-phosphate + GMP + 2 H(+)</text>
        <dbReference type="Rhea" id="RHEA:27978"/>
        <dbReference type="ChEBI" id="CHEBI:15377"/>
        <dbReference type="ChEBI" id="CHEBI:15378"/>
        <dbReference type="ChEBI" id="CHEBI:57527"/>
        <dbReference type="ChEBI" id="CHEBI:58115"/>
        <dbReference type="ChEBI" id="CHEBI:58409"/>
    </reaction>
</comment>
<comment type="cofactor">
    <cofactor evidence="1">
        <name>Mg(2+)</name>
        <dbReference type="ChEBI" id="CHEBI:18420"/>
    </cofactor>
</comment>
<comment type="subunit">
    <text evidence="1">Homodimer.</text>
</comment>
<comment type="domain">
    <text evidence="1">In the dimer, the N-terminal domains are swapped between the two monomers, such that residues of both chains contribute to the active site.</text>
</comment>
<comment type="similarity">
    <text evidence="3">Belongs to the Nudix hydrolase family. NudK subfamily.</text>
</comment>
<proteinExistence type="inferred from homology"/>
<gene>
    <name type="primary">nudK</name>
    <name type="ordered locus">KPN78578_27500</name>
    <name type="ORF">KPN_02801</name>
</gene>
<keyword id="KW-0378">Hydrolase</keyword>
<keyword id="KW-0460">Magnesium</keyword>
<keyword id="KW-0479">Metal-binding</keyword>
<organism>
    <name type="scientific">Klebsiella pneumoniae subsp. pneumoniae (strain ATCC 700721 / MGH 78578)</name>
    <dbReference type="NCBI Taxonomy" id="272620"/>
    <lineage>
        <taxon>Bacteria</taxon>
        <taxon>Pseudomonadati</taxon>
        <taxon>Pseudomonadota</taxon>
        <taxon>Gammaproteobacteria</taxon>
        <taxon>Enterobacterales</taxon>
        <taxon>Enterobacteriaceae</taxon>
        <taxon>Klebsiella/Raoultella group</taxon>
        <taxon>Klebsiella</taxon>
        <taxon>Klebsiella pneumoniae complex</taxon>
    </lineage>
</organism>
<feature type="chain" id="PRO_0000342492" description="GDP-mannose pyrophosphatase">
    <location>
        <begin position="1"/>
        <end position="198"/>
    </location>
</feature>
<feature type="domain" description="Nudix hydrolase" evidence="2">
    <location>
        <begin position="43"/>
        <end position="180"/>
    </location>
</feature>
<feature type="short sequence motif" description="Nudix box">
    <location>
        <begin position="86"/>
        <end position="106"/>
    </location>
</feature>
<feature type="binding site" evidence="1">
    <location>
        <begin position="38"/>
        <end position="40"/>
    </location>
    <ligand>
        <name>GDP-alpha-D-mannose</name>
        <dbReference type="ChEBI" id="CHEBI:57527"/>
        <note>ligand shared between dimeric partners</note>
    </ligand>
</feature>
<feature type="binding site" description="in other chain" evidence="1">
    <location>
        <position position="67"/>
    </location>
    <ligand>
        <name>GDP-alpha-D-mannose</name>
        <dbReference type="ChEBI" id="CHEBI:57527"/>
        <note>ligand shared between dimeric partners</note>
    </ligand>
</feature>
<feature type="binding site" description="in other chain" evidence="1">
    <location>
        <begin position="85"/>
        <end position="87"/>
    </location>
    <ligand>
        <name>GDP-alpha-D-mannose</name>
        <dbReference type="ChEBI" id="CHEBI:57527"/>
        <note>ligand shared between dimeric partners</note>
    </ligand>
</feature>
<feature type="binding site" evidence="1">
    <location>
        <position position="85"/>
    </location>
    <ligand>
        <name>Mg(2+)</name>
        <dbReference type="ChEBI" id="CHEBI:18420"/>
        <label>1</label>
    </ligand>
</feature>
<feature type="binding site" evidence="1">
    <location>
        <position position="100"/>
    </location>
    <ligand>
        <name>Mg(2+)</name>
        <dbReference type="ChEBI" id="CHEBI:18420"/>
        <label>2</label>
    </ligand>
</feature>
<feature type="binding site" description="in other chain" evidence="1">
    <location>
        <position position="104"/>
    </location>
    <ligand>
        <name>GDP-alpha-D-mannose</name>
        <dbReference type="ChEBI" id="CHEBI:57527"/>
        <note>ligand shared between dimeric partners</note>
    </ligand>
</feature>
<feature type="binding site" evidence="1">
    <location>
        <position position="104"/>
    </location>
    <ligand>
        <name>Mg(2+)</name>
        <dbReference type="ChEBI" id="CHEBI:18420"/>
        <label>1</label>
    </ligand>
</feature>
<feature type="binding site" evidence="1">
    <location>
        <position position="104"/>
    </location>
    <ligand>
        <name>Mg(2+)</name>
        <dbReference type="ChEBI" id="CHEBI:18420"/>
        <label>2</label>
    </ligand>
</feature>
<feature type="binding site" description="in other chain" evidence="1">
    <location>
        <position position="127"/>
    </location>
    <ligand>
        <name>GDP-alpha-D-mannose</name>
        <dbReference type="ChEBI" id="CHEBI:57527"/>
        <note>ligand shared between dimeric partners</note>
    </ligand>
</feature>
<feature type="binding site" description="in other chain" evidence="1">
    <location>
        <begin position="150"/>
        <end position="151"/>
    </location>
    <ligand>
        <name>GDP-alpha-D-mannose</name>
        <dbReference type="ChEBI" id="CHEBI:57527"/>
        <note>ligand shared between dimeric partners</note>
    </ligand>
</feature>
<feature type="binding site" evidence="1">
    <location>
        <position position="151"/>
    </location>
    <ligand>
        <name>Mg(2+)</name>
        <dbReference type="ChEBI" id="CHEBI:18420"/>
        <label>2</label>
    </ligand>
</feature>
<feature type="binding site" description="in other chain" evidence="1">
    <location>
        <position position="176"/>
    </location>
    <ligand>
        <name>GDP-alpha-D-mannose</name>
        <dbReference type="ChEBI" id="CHEBI:57527"/>
        <note>ligand shared between dimeric partners</note>
    </ligand>
</feature>
<protein>
    <recommendedName>
        <fullName>GDP-mannose pyrophosphatase</fullName>
        <ecNumber evidence="1">3.6.1.-</ecNumber>
    </recommendedName>
    <alternativeName>
        <fullName>GDP-mannose hydrolase</fullName>
    </alternativeName>
    <alternativeName>
        <fullName>GDPMK</fullName>
    </alternativeName>
</protein>
<accession>A6TC90</accession>
<name>NUDK_KLEP7</name>
<reference key="1">
    <citation type="submission" date="2006-09" db="EMBL/GenBank/DDBJ databases">
        <authorList>
            <consortium name="The Klebsiella pneumonia Genome Sequencing Project"/>
            <person name="McClelland M."/>
            <person name="Sanderson E.K."/>
            <person name="Spieth J."/>
            <person name="Clifton W.S."/>
            <person name="Latreille P."/>
            <person name="Sabo A."/>
            <person name="Pepin K."/>
            <person name="Bhonagiri V."/>
            <person name="Porwollik S."/>
            <person name="Ali J."/>
            <person name="Wilson R.K."/>
        </authorList>
    </citation>
    <scope>NUCLEOTIDE SEQUENCE [LARGE SCALE GENOMIC DNA]</scope>
    <source>
        <strain>ATCC 700721 / MGH 78578</strain>
    </source>
</reference>